<reference key="1">
    <citation type="submission" date="2008-10" db="EMBL/GenBank/DDBJ databases">
        <title>Genome sequence of Bacillus cereus AH820.</title>
        <authorList>
            <person name="Dodson R.J."/>
            <person name="Durkin A.S."/>
            <person name="Rosovitz M.J."/>
            <person name="Rasko D.A."/>
            <person name="Hoffmaster A."/>
            <person name="Ravel J."/>
            <person name="Sutton G."/>
        </authorList>
    </citation>
    <scope>NUCLEOTIDE SEQUENCE [LARGE SCALE GENOMIC DNA]</scope>
    <source>
        <strain>AH820</strain>
    </source>
</reference>
<comment type="similarity">
    <text evidence="1">Belongs to the UPF0738 family.</text>
</comment>
<sequence>MQNKIQVKSVEKRENALIFCAENSEIEVKGLSARNHVLVDSDNLSFLYILENESSFIYVSIPHTCWEAMHEAMNNDVVMFVRVNDIEMELEGLKEEVEYLVENIEGNANYGEELVTAVEKVFL</sequence>
<proteinExistence type="inferred from homology"/>
<accession>B7JEP0</accession>
<organism>
    <name type="scientific">Bacillus cereus (strain AH820)</name>
    <dbReference type="NCBI Taxonomy" id="405535"/>
    <lineage>
        <taxon>Bacteria</taxon>
        <taxon>Bacillati</taxon>
        <taxon>Bacillota</taxon>
        <taxon>Bacilli</taxon>
        <taxon>Bacillales</taxon>
        <taxon>Bacillaceae</taxon>
        <taxon>Bacillus</taxon>
        <taxon>Bacillus cereus group</taxon>
    </lineage>
</organism>
<feature type="chain" id="PRO_0000369639" description="UPF0738 protein BCAH820_1281">
    <location>
        <begin position="1"/>
        <end position="123"/>
    </location>
</feature>
<gene>
    <name type="ordered locus">BCAH820_1281</name>
</gene>
<name>Y1281_BACC0</name>
<dbReference type="EMBL" id="CP001283">
    <property type="protein sequence ID" value="ACK88342.1"/>
    <property type="molecule type" value="Genomic_DNA"/>
</dbReference>
<dbReference type="RefSeq" id="WP_001180009.1">
    <property type="nucleotide sequence ID" value="NC_011773.1"/>
</dbReference>
<dbReference type="KEGG" id="bcu:BCAH820_1281"/>
<dbReference type="HOGENOM" id="CLU_142282_0_0_9"/>
<dbReference type="Proteomes" id="UP000001363">
    <property type="component" value="Chromosome"/>
</dbReference>
<dbReference type="HAMAP" id="MF_01861">
    <property type="entry name" value="UPF0738"/>
    <property type="match status" value="1"/>
</dbReference>
<dbReference type="InterPro" id="IPR020908">
    <property type="entry name" value="UPF0738"/>
</dbReference>
<dbReference type="Pfam" id="PF19785">
    <property type="entry name" value="UPF0738"/>
    <property type="match status" value="1"/>
</dbReference>
<evidence type="ECO:0000255" key="1">
    <source>
        <dbReference type="HAMAP-Rule" id="MF_01861"/>
    </source>
</evidence>
<protein>
    <recommendedName>
        <fullName evidence="1">UPF0738 protein BCAH820_1281</fullName>
    </recommendedName>
</protein>